<dbReference type="EC" id="6.3.4.21" evidence="1"/>
<dbReference type="EMBL" id="CP000626">
    <property type="protein sequence ID" value="ABQ19254.1"/>
    <property type="molecule type" value="Genomic_DNA"/>
</dbReference>
<dbReference type="EMBL" id="CP001236">
    <property type="protein sequence ID" value="ACP10938.1"/>
    <property type="molecule type" value="Genomic_DNA"/>
</dbReference>
<dbReference type="RefSeq" id="WP_001069589.1">
    <property type="nucleotide sequence ID" value="NZ_JAACZH010000004.1"/>
</dbReference>
<dbReference type="SMR" id="A5F1F1"/>
<dbReference type="KEGG" id="vco:VC0395_0041"/>
<dbReference type="KEGG" id="vcr:VC395_A0091"/>
<dbReference type="PATRIC" id="fig|345073.21.peg.2849"/>
<dbReference type="eggNOG" id="COG1488">
    <property type="taxonomic scope" value="Bacteria"/>
</dbReference>
<dbReference type="HOGENOM" id="CLU_030991_1_0_6"/>
<dbReference type="OrthoDB" id="9771406at2"/>
<dbReference type="UniPathway" id="UPA00253">
    <property type="reaction ID" value="UER00457"/>
</dbReference>
<dbReference type="Proteomes" id="UP000000249">
    <property type="component" value="Chromosome 1"/>
</dbReference>
<dbReference type="GO" id="GO:0005829">
    <property type="term" value="C:cytosol"/>
    <property type="evidence" value="ECO:0007669"/>
    <property type="project" value="TreeGrafter"/>
</dbReference>
<dbReference type="GO" id="GO:0004516">
    <property type="term" value="F:nicotinate phosphoribosyltransferase activity"/>
    <property type="evidence" value="ECO:0007669"/>
    <property type="project" value="UniProtKB-UniRule"/>
</dbReference>
<dbReference type="GO" id="GO:0034355">
    <property type="term" value="P:NAD biosynthetic process via the salvage pathway"/>
    <property type="evidence" value="ECO:0007669"/>
    <property type="project" value="TreeGrafter"/>
</dbReference>
<dbReference type="CDD" id="cd01401">
    <property type="entry name" value="PncB_like"/>
    <property type="match status" value="1"/>
</dbReference>
<dbReference type="Gene3D" id="3.20.140.10">
    <property type="entry name" value="nicotinate phosphoribosyltransferase"/>
    <property type="match status" value="1"/>
</dbReference>
<dbReference type="HAMAP" id="MF_00570">
    <property type="entry name" value="NAPRTase"/>
    <property type="match status" value="1"/>
</dbReference>
<dbReference type="InterPro" id="IPR041525">
    <property type="entry name" value="N/Namide_PRibTrfase"/>
</dbReference>
<dbReference type="InterPro" id="IPR040727">
    <property type="entry name" value="NAPRTase_N"/>
</dbReference>
<dbReference type="InterPro" id="IPR006406">
    <property type="entry name" value="Nic_PRibTrfase"/>
</dbReference>
<dbReference type="InterPro" id="IPR007229">
    <property type="entry name" value="Nic_PRibTrfase-Fam"/>
</dbReference>
<dbReference type="InterPro" id="IPR036068">
    <property type="entry name" value="Nicotinate_pribotase-like_C"/>
</dbReference>
<dbReference type="NCBIfam" id="TIGR01514">
    <property type="entry name" value="NAPRTase"/>
    <property type="match status" value="1"/>
</dbReference>
<dbReference type="NCBIfam" id="NF003704">
    <property type="entry name" value="PRK05321.1"/>
    <property type="match status" value="1"/>
</dbReference>
<dbReference type="PANTHER" id="PTHR11098">
    <property type="entry name" value="NICOTINATE PHOSPHORIBOSYLTRANSFERASE"/>
    <property type="match status" value="1"/>
</dbReference>
<dbReference type="PANTHER" id="PTHR11098:SF1">
    <property type="entry name" value="NICOTINATE PHOSPHORIBOSYLTRANSFERASE"/>
    <property type="match status" value="1"/>
</dbReference>
<dbReference type="Pfam" id="PF04095">
    <property type="entry name" value="NAPRTase"/>
    <property type="match status" value="1"/>
</dbReference>
<dbReference type="Pfam" id="PF17767">
    <property type="entry name" value="NAPRTase_N"/>
    <property type="match status" value="1"/>
</dbReference>
<dbReference type="PIRSF" id="PIRSF000484">
    <property type="entry name" value="NAPRT"/>
    <property type="match status" value="1"/>
</dbReference>
<dbReference type="SUPFAM" id="SSF51690">
    <property type="entry name" value="Nicotinate/Quinolinate PRTase C-terminal domain-like"/>
    <property type="match status" value="1"/>
</dbReference>
<dbReference type="SUPFAM" id="SSF54675">
    <property type="entry name" value="Nicotinate/Quinolinate PRTase N-terminal domain-like"/>
    <property type="match status" value="1"/>
</dbReference>
<organism>
    <name type="scientific">Vibrio cholerae serotype O1 (strain ATCC 39541 / Classical Ogawa 395 / O395)</name>
    <dbReference type="NCBI Taxonomy" id="345073"/>
    <lineage>
        <taxon>Bacteria</taxon>
        <taxon>Pseudomonadati</taxon>
        <taxon>Pseudomonadota</taxon>
        <taxon>Gammaproteobacteria</taxon>
        <taxon>Vibrionales</taxon>
        <taxon>Vibrionaceae</taxon>
        <taxon>Vibrio</taxon>
    </lineage>
</organism>
<proteinExistence type="inferred from homology"/>
<accession>A5F1F1</accession>
<accession>C3M7E2</accession>
<name>PNCB_VIBC3</name>
<comment type="function">
    <text evidence="1">Catalyzes the synthesis of beta-nicotinate D-ribonucleotide from nicotinate and 5-phospho-D-ribose 1-phosphate at the expense of ATP.</text>
</comment>
<comment type="catalytic activity">
    <reaction evidence="1">
        <text>nicotinate + 5-phospho-alpha-D-ribose 1-diphosphate + ATP + H2O = nicotinate beta-D-ribonucleotide + ADP + phosphate + diphosphate</text>
        <dbReference type="Rhea" id="RHEA:36163"/>
        <dbReference type="ChEBI" id="CHEBI:15377"/>
        <dbReference type="ChEBI" id="CHEBI:30616"/>
        <dbReference type="ChEBI" id="CHEBI:32544"/>
        <dbReference type="ChEBI" id="CHEBI:33019"/>
        <dbReference type="ChEBI" id="CHEBI:43474"/>
        <dbReference type="ChEBI" id="CHEBI:57502"/>
        <dbReference type="ChEBI" id="CHEBI:58017"/>
        <dbReference type="ChEBI" id="CHEBI:456216"/>
        <dbReference type="EC" id="6.3.4.21"/>
    </reaction>
</comment>
<comment type="pathway">
    <text evidence="1">Cofactor biosynthesis; NAD(+) biosynthesis; nicotinate D-ribonucleotide from nicotinate: step 1/1.</text>
</comment>
<comment type="PTM">
    <text evidence="1">Transiently phosphorylated on a His residue during the reaction cycle. Phosphorylation strongly increases the affinity for substrates and increases the rate of nicotinate D-ribonucleotide production. Dephosphorylation regenerates the low-affinity form of the enzyme, leading to product release.</text>
</comment>
<comment type="similarity">
    <text evidence="1">Belongs to the NAPRTase family.</text>
</comment>
<evidence type="ECO:0000255" key="1">
    <source>
        <dbReference type="HAMAP-Rule" id="MF_00570"/>
    </source>
</evidence>
<gene>
    <name evidence="1" type="primary">pncB</name>
    <name type="ordered locus">VC0395_0041</name>
    <name type="ordered locus">VC395_A0091</name>
</gene>
<protein>
    <recommendedName>
        <fullName evidence="1">Nicotinate phosphoribosyltransferase</fullName>
        <shortName evidence="1">NAPRTase</shortName>
        <ecNumber evidence="1">6.3.4.21</ecNumber>
    </recommendedName>
</protein>
<feature type="chain" id="PRO_1000072576" description="Nicotinate phosphoribosyltransferase">
    <location>
        <begin position="1"/>
        <end position="435"/>
    </location>
</feature>
<feature type="modified residue" description="Phosphohistidine; by autocatalysis" evidence="1">
    <location>
        <position position="230"/>
    </location>
</feature>
<reference key="1">
    <citation type="submission" date="2007-03" db="EMBL/GenBank/DDBJ databases">
        <authorList>
            <person name="Heidelberg J."/>
        </authorList>
    </citation>
    <scope>NUCLEOTIDE SEQUENCE [LARGE SCALE GENOMIC DNA]</scope>
    <source>
        <strain>ATCC 39541 / Classical Ogawa 395 / O395</strain>
    </source>
</reference>
<reference key="2">
    <citation type="journal article" date="2008" name="PLoS ONE">
        <title>A recalibrated molecular clock and independent origins for the cholera pandemic clones.</title>
        <authorList>
            <person name="Feng L."/>
            <person name="Reeves P.R."/>
            <person name="Lan R."/>
            <person name="Ren Y."/>
            <person name="Gao C."/>
            <person name="Zhou Z."/>
            <person name="Ren Y."/>
            <person name="Cheng J."/>
            <person name="Wang W."/>
            <person name="Wang J."/>
            <person name="Qian W."/>
            <person name="Li D."/>
            <person name="Wang L."/>
        </authorList>
    </citation>
    <scope>NUCLEOTIDE SEQUENCE [LARGE SCALE GENOMIC DNA]</scope>
    <source>
        <strain>ATCC 39541 / Classical Ogawa 395 / O395</strain>
    </source>
</reference>
<sequence length="435" mass="50078">MNPRLFSPHIIRSLLDLDAYKINMMQAIHHFYPDVSVRYELIVRSEEDASGLLDAIRQEIAHLGTLRFSDADIHYLTQHAPHLKATFLQSLRYFHFVPQEQVEMGIVKQGGKQQLRISIRGSWRDTILYETLVMAIVSEVRSRQRWAEVPADLPLKVLKTKLDQLKAEIERRGINNFSLTEMGTRRRFSSQVQRDVLACLKQEIPQWVLGTSNYHFAREFDLKPIGTIAHEWFMGHQALVNERDSQQVALERWLTAFDGMLAIAPTDTLTIDAFLNDFNRHLANAYDGVRHDSGCPFRWGDKMIAHYQQLGIDPTTKLFIFSDGLDFDQALELCEYFAGRVKISFGIGTFLTNDLANWRNAAGVEYRPLSIVIKLAECQGRPVAKISDQPEKAMCEDPIFLANLKRRFNIELDVDALIQELRHQKRSPRHYISAA</sequence>
<keyword id="KW-0436">Ligase</keyword>
<keyword id="KW-0597">Phosphoprotein</keyword>
<keyword id="KW-0662">Pyridine nucleotide biosynthesis</keyword>